<sequence length="253" mass="27653">MITNTAAYQFAPIHDPQQLADSVLERAQQRALKGSVLVAEEGINLFLAGDAEQIAGFYAWLHADARFAQMRVKYSHSAEQPFARLKVKVKPEIISFRRDDASPLQGRAPSVAPAMLRKWMQQGHDDHGRPLVLLDTRNAQEVAYGTFQGALTLPIDKFTELPEALQPHRAALADATVVSFCTGGIRCEKAALWMHAEGMDNVLQLEGGILGYFEDVGGEGYDGRCFVFDERVALDAELRPLGDGAACADAGKI</sequence>
<reference key="1">
    <citation type="journal article" date="2008" name="J. Biotechnol.">
        <title>The genome of Xanthomonas campestris pv. campestris B100 and its use for the reconstruction of metabolic pathways involved in xanthan biosynthesis.</title>
        <authorList>
            <person name="Vorhoelter F.-J."/>
            <person name="Schneiker S."/>
            <person name="Goesmann A."/>
            <person name="Krause L."/>
            <person name="Bekel T."/>
            <person name="Kaiser O."/>
            <person name="Linke B."/>
            <person name="Patschkowski T."/>
            <person name="Rueckert C."/>
            <person name="Schmid J."/>
            <person name="Sidhu V.K."/>
            <person name="Sieber V."/>
            <person name="Tauch A."/>
            <person name="Watt S.A."/>
            <person name="Weisshaar B."/>
            <person name="Becker A."/>
            <person name="Niehaus K."/>
            <person name="Puehler A."/>
        </authorList>
    </citation>
    <scope>NUCLEOTIDE SEQUENCE [LARGE SCALE GENOMIC DNA]</scope>
    <source>
        <strain>B100</strain>
    </source>
</reference>
<accession>B0RTI2</accession>
<feature type="chain" id="PRO_1000200387" description="tRNA uridine(34) hydroxylase">
    <location>
        <begin position="1"/>
        <end position="253"/>
    </location>
</feature>
<feature type="domain" description="Rhodanese" evidence="1">
    <location>
        <begin position="127"/>
        <end position="221"/>
    </location>
</feature>
<feature type="active site" description="Cysteine persulfide intermediate" evidence="1">
    <location>
        <position position="181"/>
    </location>
</feature>
<comment type="function">
    <text evidence="1">Catalyzes oxygen-dependent 5-hydroxyuridine (ho5U) modification at position 34 in tRNAs.</text>
</comment>
<comment type="catalytic activity">
    <reaction evidence="1">
        <text>uridine(34) in tRNA + AH2 + O2 = 5-hydroxyuridine(34) in tRNA + A + H2O</text>
        <dbReference type="Rhea" id="RHEA:64224"/>
        <dbReference type="Rhea" id="RHEA-COMP:11727"/>
        <dbReference type="Rhea" id="RHEA-COMP:13381"/>
        <dbReference type="ChEBI" id="CHEBI:13193"/>
        <dbReference type="ChEBI" id="CHEBI:15377"/>
        <dbReference type="ChEBI" id="CHEBI:15379"/>
        <dbReference type="ChEBI" id="CHEBI:17499"/>
        <dbReference type="ChEBI" id="CHEBI:65315"/>
        <dbReference type="ChEBI" id="CHEBI:136877"/>
    </reaction>
</comment>
<comment type="similarity">
    <text evidence="1">Belongs to the TrhO family.</text>
</comment>
<keyword id="KW-0560">Oxidoreductase</keyword>
<keyword id="KW-0819">tRNA processing</keyword>
<dbReference type="EC" id="1.14.-.-" evidence="1"/>
<dbReference type="EMBL" id="AM920689">
    <property type="protein sequence ID" value="CAP51746.1"/>
    <property type="molecule type" value="Genomic_DNA"/>
</dbReference>
<dbReference type="SMR" id="B0RTI2"/>
<dbReference type="KEGG" id="xca:xcc-b100_2387"/>
<dbReference type="HOGENOM" id="CLU_038878_0_1_6"/>
<dbReference type="Proteomes" id="UP000001188">
    <property type="component" value="Chromosome"/>
</dbReference>
<dbReference type="GO" id="GO:0016705">
    <property type="term" value="F:oxidoreductase activity, acting on paired donors, with incorporation or reduction of molecular oxygen"/>
    <property type="evidence" value="ECO:0007669"/>
    <property type="project" value="UniProtKB-UniRule"/>
</dbReference>
<dbReference type="GO" id="GO:0006400">
    <property type="term" value="P:tRNA modification"/>
    <property type="evidence" value="ECO:0007669"/>
    <property type="project" value="UniProtKB-UniRule"/>
</dbReference>
<dbReference type="Gene3D" id="3.30.70.100">
    <property type="match status" value="1"/>
</dbReference>
<dbReference type="Gene3D" id="3.40.250.10">
    <property type="entry name" value="Rhodanese-like domain"/>
    <property type="match status" value="1"/>
</dbReference>
<dbReference type="HAMAP" id="MF_00469">
    <property type="entry name" value="TrhO"/>
    <property type="match status" value="1"/>
</dbReference>
<dbReference type="InterPro" id="IPR001763">
    <property type="entry name" value="Rhodanese-like_dom"/>
</dbReference>
<dbReference type="InterPro" id="IPR036873">
    <property type="entry name" value="Rhodanese-like_dom_sf"/>
</dbReference>
<dbReference type="InterPro" id="IPR020936">
    <property type="entry name" value="TrhO"/>
</dbReference>
<dbReference type="InterPro" id="IPR040503">
    <property type="entry name" value="TRHO_N"/>
</dbReference>
<dbReference type="NCBIfam" id="NF003703">
    <property type="entry name" value="PRK05320.1"/>
    <property type="match status" value="1"/>
</dbReference>
<dbReference type="PANTHER" id="PTHR43268:SF3">
    <property type="entry name" value="RHODANESE-LIKE DOMAIN-CONTAINING PROTEIN 7-RELATED"/>
    <property type="match status" value="1"/>
</dbReference>
<dbReference type="PANTHER" id="PTHR43268">
    <property type="entry name" value="THIOSULFATE SULFURTRANSFERASE/RHODANESE-LIKE DOMAIN-CONTAINING PROTEIN 2"/>
    <property type="match status" value="1"/>
</dbReference>
<dbReference type="Pfam" id="PF00581">
    <property type="entry name" value="Rhodanese"/>
    <property type="match status" value="1"/>
</dbReference>
<dbReference type="Pfam" id="PF17773">
    <property type="entry name" value="UPF0176_N"/>
    <property type="match status" value="1"/>
</dbReference>
<dbReference type="SMART" id="SM00450">
    <property type="entry name" value="RHOD"/>
    <property type="match status" value="1"/>
</dbReference>
<dbReference type="SUPFAM" id="SSF52821">
    <property type="entry name" value="Rhodanese/Cell cycle control phosphatase"/>
    <property type="match status" value="1"/>
</dbReference>
<dbReference type="PROSITE" id="PS50206">
    <property type="entry name" value="RHODANESE_3"/>
    <property type="match status" value="1"/>
</dbReference>
<name>TRHO_XANCB</name>
<gene>
    <name evidence="1" type="primary">trhO</name>
    <name type="ordered locus">xcc-b100_2387</name>
</gene>
<proteinExistence type="inferred from homology"/>
<organism>
    <name type="scientific">Xanthomonas campestris pv. campestris (strain B100)</name>
    <dbReference type="NCBI Taxonomy" id="509169"/>
    <lineage>
        <taxon>Bacteria</taxon>
        <taxon>Pseudomonadati</taxon>
        <taxon>Pseudomonadota</taxon>
        <taxon>Gammaproteobacteria</taxon>
        <taxon>Lysobacterales</taxon>
        <taxon>Lysobacteraceae</taxon>
        <taxon>Xanthomonas</taxon>
    </lineage>
</organism>
<protein>
    <recommendedName>
        <fullName evidence="1">tRNA uridine(34) hydroxylase</fullName>
        <ecNumber evidence="1">1.14.-.-</ecNumber>
    </recommendedName>
    <alternativeName>
        <fullName evidence="1">tRNA hydroxylation protein O</fullName>
    </alternativeName>
</protein>
<evidence type="ECO:0000255" key="1">
    <source>
        <dbReference type="HAMAP-Rule" id="MF_00469"/>
    </source>
</evidence>